<accession>A3PNF3</accession>
<protein>
    <recommendedName>
        <fullName evidence="1">4-hydroxy-tetrahydrodipicolinate reductase</fullName>
        <shortName evidence="1">HTPA reductase</shortName>
        <ecNumber evidence="1">1.17.1.8</ecNumber>
    </recommendedName>
</protein>
<feature type="chain" id="PRO_1000008622" description="4-hydroxy-tetrahydrodipicolinate reductase">
    <location>
        <begin position="1"/>
        <end position="269"/>
    </location>
</feature>
<feature type="active site" description="Proton donor/acceptor" evidence="1">
    <location>
        <position position="158"/>
    </location>
</feature>
<feature type="active site" description="Proton donor" evidence="1">
    <location>
        <position position="162"/>
    </location>
</feature>
<feature type="binding site" evidence="1">
    <location>
        <begin position="11"/>
        <end position="16"/>
    </location>
    <ligand>
        <name>NAD(+)</name>
        <dbReference type="ChEBI" id="CHEBI:57540"/>
    </ligand>
</feature>
<feature type="binding site" evidence="1">
    <location>
        <position position="37"/>
    </location>
    <ligand>
        <name>NAD(+)</name>
        <dbReference type="ChEBI" id="CHEBI:57540"/>
    </ligand>
</feature>
<feature type="binding site" evidence="1">
    <location>
        <position position="38"/>
    </location>
    <ligand>
        <name>NADP(+)</name>
        <dbReference type="ChEBI" id="CHEBI:58349"/>
    </ligand>
</feature>
<feature type="binding site" evidence="1">
    <location>
        <begin position="101"/>
        <end position="103"/>
    </location>
    <ligand>
        <name>NAD(+)</name>
        <dbReference type="ChEBI" id="CHEBI:57540"/>
    </ligand>
</feature>
<feature type="binding site" evidence="1">
    <location>
        <begin position="125"/>
        <end position="128"/>
    </location>
    <ligand>
        <name>NAD(+)</name>
        <dbReference type="ChEBI" id="CHEBI:57540"/>
    </ligand>
</feature>
<feature type="binding site" evidence="1">
    <location>
        <position position="159"/>
    </location>
    <ligand>
        <name>(S)-2,3,4,5-tetrahydrodipicolinate</name>
        <dbReference type="ChEBI" id="CHEBI:16845"/>
    </ligand>
</feature>
<feature type="binding site" evidence="1">
    <location>
        <begin position="168"/>
        <end position="169"/>
    </location>
    <ligand>
        <name>(S)-2,3,4,5-tetrahydrodipicolinate</name>
        <dbReference type="ChEBI" id="CHEBI:16845"/>
    </ligand>
</feature>
<keyword id="KW-0028">Amino-acid biosynthesis</keyword>
<keyword id="KW-0963">Cytoplasm</keyword>
<keyword id="KW-0220">Diaminopimelate biosynthesis</keyword>
<keyword id="KW-0457">Lysine biosynthesis</keyword>
<keyword id="KW-0520">NAD</keyword>
<keyword id="KW-0521">NADP</keyword>
<keyword id="KW-0560">Oxidoreductase</keyword>
<sequence>MSDLPGIVVTGASGRMGQMLMKTVLASGKARLVGAVERPGSDWVGRDAGAAMGGAAIGVTVTDDPLAAFAQAQAVIDFTAPEATVQFAELAAQARAVHVIGTTGLEPVHLERLAWAAHHAVIVRAGNMSLGVNLLTRLTQKVAEALDEDWDIEVVEAHHRMKVDAPSGTALMLGEAAARGRGVDLAQARVSGRDGITGPRAPGSIGFSAIRGGDIVGEHDVIFAAAGERITLRHVATDRAIFARGALKAALWGQDKRPGQYDMMDVLGL</sequence>
<proteinExistence type="inferred from homology"/>
<comment type="function">
    <text evidence="1">Catalyzes the conversion of 4-hydroxy-tetrahydrodipicolinate (HTPA) to tetrahydrodipicolinate.</text>
</comment>
<comment type="catalytic activity">
    <reaction evidence="1">
        <text>(S)-2,3,4,5-tetrahydrodipicolinate + NAD(+) + H2O = (2S,4S)-4-hydroxy-2,3,4,5-tetrahydrodipicolinate + NADH + H(+)</text>
        <dbReference type="Rhea" id="RHEA:35323"/>
        <dbReference type="ChEBI" id="CHEBI:15377"/>
        <dbReference type="ChEBI" id="CHEBI:15378"/>
        <dbReference type="ChEBI" id="CHEBI:16845"/>
        <dbReference type="ChEBI" id="CHEBI:57540"/>
        <dbReference type="ChEBI" id="CHEBI:57945"/>
        <dbReference type="ChEBI" id="CHEBI:67139"/>
        <dbReference type="EC" id="1.17.1.8"/>
    </reaction>
</comment>
<comment type="catalytic activity">
    <reaction evidence="1">
        <text>(S)-2,3,4,5-tetrahydrodipicolinate + NADP(+) + H2O = (2S,4S)-4-hydroxy-2,3,4,5-tetrahydrodipicolinate + NADPH + H(+)</text>
        <dbReference type="Rhea" id="RHEA:35331"/>
        <dbReference type="ChEBI" id="CHEBI:15377"/>
        <dbReference type="ChEBI" id="CHEBI:15378"/>
        <dbReference type="ChEBI" id="CHEBI:16845"/>
        <dbReference type="ChEBI" id="CHEBI:57783"/>
        <dbReference type="ChEBI" id="CHEBI:58349"/>
        <dbReference type="ChEBI" id="CHEBI:67139"/>
        <dbReference type="EC" id="1.17.1.8"/>
    </reaction>
</comment>
<comment type="pathway">
    <text evidence="1">Amino-acid biosynthesis; L-lysine biosynthesis via DAP pathway; (S)-tetrahydrodipicolinate from L-aspartate: step 4/4.</text>
</comment>
<comment type="subcellular location">
    <subcellularLocation>
        <location evidence="1">Cytoplasm</location>
    </subcellularLocation>
</comment>
<comment type="similarity">
    <text evidence="1">Belongs to the DapB family.</text>
</comment>
<comment type="caution">
    <text evidence="2">Was originally thought to be a dihydrodipicolinate reductase (DHDPR), catalyzing the conversion of dihydrodipicolinate to tetrahydrodipicolinate. However, it was shown in E.coli that the substrate of the enzymatic reaction is not dihydrodipicolinate (DHDP) but in fact (2S,4S)-4-hydroxy-2,3,4,5-tetrahydrodipicolinic acid (HTPA), the product released by the DapA-catalyzed reaction.</text>
</comment>
<dbReference type="EC" id="1.17.1.8" evidence="1"/>
<dbReference type="EMBL" id="CP000577">
    <property type="protein sequence ID" value="ABN77869.1"/>
    <property type="molecule type" value="Genomic_DNA"/>
</dbReference>
<dbReference type="RefSeq" id="WP_011841874.1">
    <property type="nucleotide sequence ID" value="NC_009049.1"/>
</dbReference>
<dbReference type="SMR" id="A3PNF3"/>
<dbReference type="KEGG" id="rsh:Rsph17029_2767"/>
<dbReference type="HOGENOM" id="CLU_047479_2_1_5"/>
<dbReference type="UniPathway" id="UPA00034">
    <property type="reaction ID" value="UER00018"/>
</dbReference>
<dbReference type="GO" id="GO:0005829">
    <property type="term" value="C:cytosol"/>
    <property type="evidence" value="ECO:0007669"/>
    <property type="project" value="TreeGrafter"/>
</dbReference>
<dbReference type="GO" id="GO:0008839">
    <property type="term" value="F:4-hydroxy-tetrahydrodipicolinate reductase"/>
    <property type="evidence" value="ECO:0007669"/>
    <property type="project" value="UniProtKB-EC"/>
</dbReference>
<dbReference type="GO" id="GO:0051287">
    <property type="term" value="F:NAD binding"/>
    <property type="evidence" value="ECO:0007669"/>
    <property type="project" value="UniProtKB-UniRule"/>
</dbReference>
<dbReference type="GO" id="GO:0050661">
    <property type="term" value="F:NADP binding"/>
    <property type="evidence" value="ECO:0007669"/>
    <property type="project" value="UniProtKB-UniRule"/>
</dbReference>
<dbReference type="GO" id="GO:0016726">
    <property type="term" value="F:oxidoreductase activity, acting on CH or CH2 groups, NAD or NADP as acceptor"/>
    <property type="evidence" value="ECO:0007669"/>
    <property type="project" value="UniProtKB-UniRule"/>
</dbReference>
<dbReference type="GO" id="GO:0019877">
    <property type="term" value="P:diaminopimelate biosynthetic process"/>
    <property type="evidence" value="ECO:0007669"/>
    <property type="project" value="UniProtKB-UniRule"/>
</dbReference>
<dbReference type="GO" id="GO:0009089">
    <property type="term" value="P:lysine biosynthetic process via diaminopimelate"/>
    <property type="evidence" value="ECO:0007669"/>
    <property type="project" value="UniProtKB-UniRule"/>
</dbReference>
<dbReference type="CDD" id="cd02274">
    <property type="entry name" value="DHDPR_N"/>
    <property type="match status" value="1"/>
</dbReference>
<dbReference type="FunFam" id="3.30.360.10:FF:000004">
    <property type="entry name" value="4-hydroxy-tetrahydrodipicolinate reductase"/>
    <property type="match status" value="1"/>
</dbReference>
<dbReference type="Gene3D" id="3.30.360.10">
    <property type="entry name" value="Dihydrodipicolinate Reductase, domain 2"/>
    <property type="match status" value="1"/>
</dbReference>
<dbReference type="Gene3D" id="3.40.50.720">
    <property type="entry name" value="NAD(P)-binding Rossmann-like Domain"/>
    <property type="match status" value="1"/>
</dbReference>
<dbReference type="HAMAP" id="MF_00102">
    <property type="entry name" value="DapB"/>
    <property type="match status" value="1"/>
</dbReference>
<dbReference type="InterPro" id="IPR022663">
    <property type="entry name" value="DapB_C"/>
</dbReference>
<dbReference type="InterPro" id="IPR000846">
    <property type="entry name" value="DapB_N"/>
</dbReference>
<dbReference type="InterPro" id="IPR022664">
    <property type="entry name" value="DapB_N_CS"/>
</dbReference>
<dbReference type="InterPro" id="IPR023940">
    <property type="entry name" value="DHDPR_bac"/>
</dbReference>
<dbReference type="InterPro" id="IPR036291">
    <property type="entry name" value="NAD(P)-bd_dom_sf"/>
</dbReference>
<dbReference type="NCBIfam" id="TIGR00036">
    <property type="entry name" value="dapB"/>
    <property type="match status" value="1"/>
</dbReference>
<dbReference type="PANTHER" id="PTHR20836:SF0">
    <property type="entry name" value="4-HYDROXY-TETRAHYDRODIPICOLINATE REDUCTASE 1, CHLOROPLASTIC-RELATED"/>
    <property type="match status" value="1"/>
</dbReference>
<dbReference type="PANTHER" id="PTHR20836">
    <property type="entry name" value="DIHYDRODIPICOLINATE REDUCTASE"/>
    <property type="match status" value="1"/>
</dbReference>
<dbReference type="Pfam" id="PF05173">
    <property type="entry name" value="DapB_C"/>
    <property type="match status" value="1"/>
</dbReference>
<dbReference type="Pfam" id="PF01113">
    <property type="entry name" value="DapB_N"/>
    <property type="match status" value="1"/>
</dbReference>
<dbReference type="PIRSF" id="PIRSF000161">
    <property type="entry name" value="DHPR"/>
    <property type="match status" value="1"/>
</dbReference>
<dbReference type="SUPFAM" id="SSF55347">
    <property type="entry name" value="Glyceraldehyde-3-phosphate dehydrogenase-like, C-terminal domain"/>
    <property type="match status" value="1"/>
</dbReference>
<dbReference type="SUPFAM" id="SSF51735">
    <property type="entry name" value="NAD(P)-binding Rossmann-fold domains"/>
    <property type="match status" value="1"/>
</dbReference>
<dbReference type="PROSITE" id="PS01298">
    <property type="entry name" value="DAPB"/>
    <property type="match status" value="1"/>
</dbReference>
<evidence type="ECO:0000255" key="1">
    <source>
        <dbReference type="HAMAP-Rule" id="MF_00102"/>
    </source>
</evidence>
<evidence type="ECO:0000305" key="2"/>
<name>DAPB_CERS1</name>
<reference key="1">
    <citation type="submission" date="2007-02" db="EMBL/GenBank/DDBJ databases">
        <title>Complete sequence of chromosome 1 of Rhodobacter sphaeroides ATCC 17029.</title>
        <authorList>
            <person name="Copeland A."/>
            <person name="Lucas S."/>
            <person name="Lapidus A."/>
            <person name="Barry K."/>
            <person name="Detter J.C."/>
            <person name="Glavina del Rio T."/>
            <person name="Hammon N."/>
            <person name="Israni S."/>
            <person name="Dalin E."/>
            <person name="Tice H."/>
            <person name="Pitluck S."/>
            <person name="Kiss H."/>
            <person name="Brettin T."/>
            <person name="Bruce D."/>
            <person name="Han C."/>
            <person name="Tapia R."/>
            <person name="Gilna P."/>
            <person name="Schmutz J."/>
            <person name="Larimer F."/>
            <person name="Land M."/>
            <person name="Hauser L."/>
            <person name="Kyrpides N."/>
            <person name="Mikhailova N."/>
            <person name="Richardson P."/>
            <person name="Mackenzie C."/>
            <person name="Choudhary M."/>
            <person name="Donohue T.J."/>
            <person name="Kaplan S."/>
        </authorList>
    </citation>
    <scope>NUCLEOTIDE SEQUENCE [LARGE SCALE GENOMIC DNA]</scope>
    <source>
        <strain>ATCC 17029 / ATH 2.4.9</strain>
    </source>
</reference>
<organism>
    <name type="scientific">Cereibacter sphaeroides (strain ATCC 17029 / ATH 2.4.9)</name>
    <name type="common">Rhodobacter sphaeroides</name>
    <dbReference type="NCBI Taxonomy" id="349101"/>
    <lineage>
        <taxon>Bacteria</taxon>
        <taxon>Pseudomonadati</taxon>
        <taxon>Pseudomonadota</taxon>
        <taxon>Alphaproteobacteria</taxon>
        <taxon>Rhodobacterales</taxon>
        <taxon>Paracoccaceae</taxon>
        <taxon>Cereibacter</taxon>
    </lineage>
</organism>
<gene>
    <name evidence="1" type="primary">dapB</name>
    <name type="ordered locus">Rsph17029_2767</name>
</gene>